<reference key="1">
    <citation type="journal article" date="1998" name="Science">
        <title>Genome sequence of the nematode C. elegans: a platform for investigating biology.</title>
        <authorList>
            <consortium name="The C. elegans sequencing consortium"/>
        </authorList>
    </citation>
    <scope>NUCLEOTIDE SEQUENCE [LARGE SCALE GENOMIC DNA]</scope>
    <source>
        <strain>Bristol N2</strain>
    </source>
</reference>
<feature type="chain" id="PRO_0000065237" description="Uncharacterized protein C45G9.5">
    <location>
        <begin position="1"/>
        <end position="316"/>
    </location>
</feature>
<gene>
    <name type="ORF">C45G9.5</name>
</gene>
<dbReference type="EMBL" id="FO080873">
    <property type="protein sequence ID" value="CCD67393.1"/>
    <property type="molecule type" value="Genomic_DNA"/>
</dbReference>
<dbReference type="PIR" id="C88448">
    <property type="entry name" value="C88448"/>
</dbReference>
<dbReference type="RefSeq" id="NP_498072.1">
    <property type="nucleotide sequence ID" value="NM_065671.9"/>
</dbReference>
<dbReference type="BioGRID" id="40919">
    <property type="interactions" value="10"/>
</dbReference>
<dbReference type="DIP" id="DIP-27061N"/>
<dbReference type="FunCoup" id="Q09278">
    <property type="interactions" value="310"/>
</dbReference>
<dbReference type="IntAct" id="Q09278">
    <property type="interactions" value="3"/>
</dbReference>
<dbReference type="STRING" id="6239.C45G9.5.1"/>
<dbReference type="PaxDb" id="6239-C45G9.5"/>
<dbReference type="PeptideAtlas" id="Q09278"/>
<dbReference type="EnsemblMetazoa" id="C45G9.5.1">
    <property type="protein sequence ID" value="C45G9.5.1"/>
    <property type="gene ID" value="WBGene00016676"/>
</dbReference>
<dbReference type="GeneID" id="175686"/>
<dbReference type="KEGG" id="cel:CELE_C45G9.5"/>
<dbReference type="UCSC" id="C45G9.5">
    <property type="organism name" value="c. elegans"/>
</dbReference>
<dbReference type="AGR" id="WB:WBGene00016676"/>
<dbReference type="CTD" id="175686"/>
<dbReference type="WormBase" id="C45G9.5">
    <property type="protein sequence ID" value="CE01856"/>
    <property type="gene ID" value="WBGene00016676"/>
</dbReference>
<dbReference type="eggNOG" id="ENOG502RYQV">
    <property type="taxonomic scope" value="Eukaryota"/>
</dbReference>
<dbReference type="HOGENOM" id="CLU_897852_0_0_1"/>
<dbReference type="InParanoid" id="Q09278"/>
<dbReference type="OMA" id="CDDWLEK"/>
<dbReference type="OrthoDB" id="5837159at2759"/>
<dbReference type="PRO" id="PR:Q09278"/>
<dbReference type="Proteomes" id="UP000001940">
    <property type="component" value="Chromosome III"/>
</dbReference>
<dbReference type="Bgee" id="WBGene00016676">
    <property type="expression patterns" value="Expressed in adult organism and 4 other cell types or tissues"/>
</dbReference>
<dbReference type="SUPFAM" id="SSF101898">
    <property type="entry name" value="NHL repeat"/>
    <property type="match status" value="1"/>
</dbReference>
<keyword id="KW-1185">Reference proteome</keyword>
<name>YQI5_CAEEL</name>
<protein>
    <recommendedName>
        <fullName>Uncharacterized protein C45G9.5</fullName>
    </recommendedName>
</protein>
<sequence length="316" mass="36018">MTQEPSDTSDYQRFDEMLLHLEPRGARVPYNVVYDQDNNIWVASKGGLYKFNGKTLRTLHEDKKFFKKMAPFPQVISYKDRIIYTSAEFSDRTTILRVISLDGDVVHESFIEGLLNSMTITDSGDMYIVKQAEPGHRNNFIMTTHLDTPIGWDVVAESKPGEAFSRICALDDKTLVASINDFPMNMFSKQRLVFYDLETNTETGSTSKAGKEPGEIFFPRFIKKYGDGFILNDKSGRFSEFKKNGEFVAIRARIDAFLGEGFDVKDGEALMALTGMVKDPNEQLICDDWLETIKLDGSSWKADREKKKQEDEQAKN</sequence>
<accession>Q09278</accession>
<proteinExistence type="predicted"/>
<organism>
    <name type="scientific">Caenorhabditis elegans</name>
    <dbReference type="NCBI Taxonomy" id="6239"/>
    <lineage>
        <taxon>Eukaryota</taxon>
        <taxon>Metazoa</taxon>
        <taxon>Ecdysozoa</taxon>
        <taxon>Nematoda</taxon>
        <taxon>Chromadorea</taxon>
        <taxon>Rhabditida</taxon>
        <taxon>Rhabditina</taxon>
        <taxon>Rhabditomorpha</taxon>
        <taxon>Rhabditoidea</taxon>
        <taxon>Rhabditidae</taxon>
        <taxon>Peloderinae</taxon>
        <taxon>Caenorhabditis</taxon>
    </lineage>
</organism>